<name>MIAB_SALCH</name>
<proteinExistence type="inferred from homology"/>
<gene>
    <name evidence="1" type="primary">miaB</name>
    <name type="ordered locus">SCH_0698</name>
</gene>
<sequence>MTKKLHIKTWGCQMNEYDSSKMADLLDATHGYQLTDVAEEADVLLLNTCSIREKAQEKVFHQLGRWRLLKEKNPDLIIGVGGCVASQEGEHIRQRAHYVDIIFGPQTLHRLPEMINSVRGDRSPVVDISFPEIEKFDRLPEPRAEGPTAFVSIMEGCNKYCTYCVVPYTRGEEVSRPSDDILFEIAQLAAQGVREVNLLGQNVNAWRGENYDGTTGTFADLLRLVAAIDGIDRIRFTTSHPIEFTDDIIEVYRDTPELVSFLHLPVQSGSDRVLNLMGRTHTALEYKAIIRKLRAARPDIQISSDFIVGFPGETTDDFEKTMKLIADVNFDMSYSFIFSARPGTPAADMVDDVPEEEKKQRLYILQERINQQAMAWSRRMLGTTQRILVEGTSRKNIMELSGRTENNRVVNFEGTPEMIGKFVDVEITDVYPNSLRGKVVRTEDEMGLRVAETPESVIARTRKENELGVGFYQP</sequence>
<evidence type="ECO:0000255" key="1">
    <source>
        <dbReference type="HAMAP-Rule" id="MF_01864"/>
    </source>
</evidence>
<evidence type="ECO:0000255" key="2">
    <source>
        <dbReference type="PROSITE-ProRule" id="PRU01266"/>
    </source>
</evidence>
<evidence type="ECO:0000305" key="3"/>
<accession>Q57RQ7</accession>
<reference key="1">
    <citation type="journal article" date="2005" name="Nucleic Acids Res.">
        <title>The genome sequence of Salmonella enterica serovar Choleraesuis, a highly invasive and resistant zoonotic pathogen.</title>
        <authorList>
            <person name="Chiu C.-H."/>
            <person name="Tang P."/>
            <person name="Chu C."/>
            <person name="Hu S."/>
            <person name="Bao Q."/>
            <person name="Yu J."/>
            <person name="Chou Y.-Y."/>
            <person name="Wang H.-S."/>
            <person name="Lee Y.-S."/>
        </authorList>
    </citation>
    <scope>NUCLEOTIDE SEQUENCE [LARGE SCALE GENOMIC DNA]</scope>
    <source>
        <strain>SC-B67</strain>
    </source>
</reference>
<dbReference type="EC" id="2.8.4.3" evidence="1"/>
<dbReference type="EMBL" id="AE017220">
    <property type="protein sequence ID" value="AAX64604.1"/>
    <property type="status" value="ALT_INIT"/>
    <property type="molecule type" value="Genomic_DNA"/>
</dbReference>
<dbReference type="RefSeq" id="WP_001519200.1">
    <property type="nucleotide sequence ID" value="NC_006905.1"/>
</dbReference>
<dbReference type="SMR" id="Q57RQ7"/>
<dbReference type="KEGG" id="sec:SCH_0698"/>
<dbReference type="HOGENOM" id="CLU_018697_2_0_6"/>
<dbReference type="Proteomes" id="UP000000538">
    <property type="component" value="Chromosome"/>
</dbReference>
<dbReference type="GO" id="GO:0005829">
    <property type="term" value="C:cytosol"/>
    <property type="evidence" value="ECO:0007669"/>
    <property type="project" value="TreeGrafter"/>
</dbReference>
<dbReference type="GO" id="GO:0051539">
    <property type="term" value="F:4 iron, 4 sulfur cluster binding"/>
    <property type="evidence" value="ECO:0007669"/>
    <property type="project" value="UniProtKB-UniRule"/>
</dbReference>
<dbReference type="GO" id="GO:0046872">
    <property type="term" value="F:metal ion binding"/>
    <property type="evidence" value="ECO:0007669"/>
    <property type="project" value="UniProtKB-KW"/>
</dbReference>
<dbReference type="GO" id="GO:0035597">
    <property type="term" value="F:N6-isopentenyladenosine methylthiotransferase activity"/>
    <property type="evidence" value="ECO:0007669"/>
    <property type="project" value="TreeGrafter"/>
</dbReference>
<dbReference type="CDD" id="cd01335">
    <property type="entry name" value="Radical_SAM"/>
    <property type="match status" value="1"/>
</dbReference>
<dbReference type="FunFam" id="3.40.50.12160:FF:000001">
    <property type="entry name" value="tRNA-2-methylthio-N(6)-dimethylallyladenosine synthase"/>
    <property type="match status" value="1"/>
</dbReference>
<dbReference type="FunFam" id="3.80.30.20:FF:000001">
    <property type="entry name" value="tRNA-2-methylthio-N(6)-dimethylallyladenosine synthase 2"/>
    <property type="match status" value="1"/>
</dbReference>
<dbReference type="Gene3D" id="3.40.50.12160">
    <property type="entry name" value="Methylthiotransferase, N-terminal domain"/>
    <property type="match status" value="1"/>
</dbReference>
<dbReference type="Gene3D" id="3.80.30.20">
    <property type="entry name" value="tm_1862 like domain"/>
    <property type="match status" value="1"/>
</dbReference>
<dbReference type="HAMAP" id="MF_01864">
    <property type="entry name" value="tRNA_metthiotr_MiaB"/>
    <property type="match status" value="1"/>
</dbReference>
<dbReference type="InterPro" id="IPR006638">
    <property type="entry name" value="Elp3/MiaA/NifB-like_rSAM"/>
</dbReference>
<dbReference type="InterPro" id="IPR005839">
    <property type="entry name" value="Methylthiotransferase"/>
</dbReference>
<dbReference type="InterPro" id="IPR020612">
    <property type="entry name" value="Methylthiotransferase_CS"/>
</dbReference>
<dbReference type="InterPro" id="IPR013848">
    <property type="entry name" value="Methylthiotransferase_N"/>
</dbReference>
<dbReference type="InterPro" id="IPR038135">
    <property type="entry name" value="Methylthiotransferase_N_sf"/>
</dbReference>
<dbReference type="InterPro" id="IPR006463">
    <property type="entry name" value="MiaB_methiolase"/>
</dbReference>
<dbReference type="InterPro" id="IPR007197">
    <property type="entry name" value="rSAM"/>
</dbReference>
<dbReference type="InterPro" id="IPR023404">
    <property type="entry name" value="rSAM_horseshoe"/>
</dbReference>
<dbReference type="InterPro" id="IPR002792">
    <property type="entry name" value="TRAM_dom"/>
</dbReference>
<dbReference type="NCBIfam" id="TIGR01574">
    <property type="entry name" value="miaB-methiolase"/>
    <property type="match status" value="1"/>
</dbReference>
<dbReference type="NCBIfam" id="TIGR00089">
    <property type="entry name" value="MiaB/RimO family radical SAM methylthiotransferase"/>
    <property type="match status" value="1"/>
</dbReference>
<dbReference type="PANTHER" id="PTHR43020">
    <property type="entry name" value="CDK5 REGULATORY SUBUNIT-ASSOCIATED PROTEIN 1"/>
    <property type="match status" value="1"/>
</dbReference>
<dbReference type="PANTHER" id="PTHR43020:SF2">
    <property type="entry name" value="MITOCHONDRIAL TRNA METHYLTHIOTRANSFERASE CDK5RAP1"/>
    <property type="match status" value="1"/>
</dbReference>
<dbReference type="Pfam" id="PF04055">
    <property type="entry name" value="Radical_SAM"/>
    <property type="match status" value="1"/>
</dbReference>
<dbReference type="Pfam" id="PF01938">
    <property type="entry name" value="TRAM"/>
    <property type="match status" value="1"/>
</dbReference>
<dbReference type="Pfam" id="PF00919">
    <property type="entry name" value="UPF0004"/>
    <property type="match status" value="1"/>
</dbReference>
<dbReference type="SFLD" id="SFLDF00273">
    <property type="entry name" value="(dimethylallyl)adenosine_tRNA"/>
    <property type="match status" value="1"/>
</dbReference>
<dbReference type="SFLD" id="SFLDG01082">
    <property type="entry name" value="B12-binding_domain_containing"/>
    <property type="match status" value="1"/>
</dbReference>
<dbReference type="SFLD" id="SFLDS00029">
    <property type="entry name" value="Radical_SAM"/>
    <property type="match status" value="1"/>
</dbReference>
<dbReference type="SMART" id="SM00729">
    <property type="entry name" value="Elp3"/>
    <property type="match status" value="1"/>
</dbReference>
<dbReference type="SUPFAM" id="SSF102114">
    <property type="entry name" value="Radical SAM enzymes"/>
    <property type="match status" value="1"/>
</dbReference>
<dbReference type="PROSITE" id="PS51449">
    <property type="entry name" value="MTTASE_N"/>
    <property type="match status" value="1"/>
</dbReference>
<dbReference type="PROSITE" id="PS01278">
    <property type="entry name" value="MTTASE_RADICAL"/>
    <property type="match status" value="1"/>
</dbReference>
<dbReference type="PROSITE" id="PS51918">
    <property type="entry name" value="RADICAL_SAM"/>
    <property type="match status" value="1"/>
</dbReference>
<dbReference type="PROSITE" id="PS50926">
    <property type="entry name" value="TRAM"/>
    <property type="match status" value="1"/>
</dbReference>
<organism>
    <name type="scientific">Salmonella choleraesuis (strain SC-B67)</name>
    <dbReference type="NCBI Taxonomy" id="321314"/>
    <lineage>
        <taxon>Bacteria</taxon>
        <taxon>Pseudomonadati</taxon>
        <taxon>Pseudomonadota</taxon>
        <taxon>Gammaproteobacteria</taxon>
        <taxon>Enterobacterales</taxon>
        <taxon>Enterobacteriaceae</taxon>
        <taxon>Salmonella</taxon>
    </lineage>
</organism>
<comment type="function">
    <text evidence="1">Catalyzes the methylthiolation of N6-(dimethylallyl)adenosine (i(6)A), leading to the formation of 2-methylthio-N6-(dimethylallyl)adenosine (ms(2)i(6)A) at position 37 in tRNAs that read codons beginning with uridine.</text>
</comment>
<comment type="catalytic activity">
    <reaction evidence="1">
        <text>N(6)-dimethylallyladenosine(37) in tRNA + (sulfur carrier)-SH + AH2 + 2 S-adenosyl-L-methionine = 2-methylsulfanyl-N(6)-dimethylallyladenosine(37) in tRNA + (sulfur carrier)-H + 5'-deoxyadenosine + L-methionine + A + S-adenosyl-L-homocysteine + 2 H(+)</text>
        <dbReference type="Rhea" id="RHEA:37067"/>
        <dbReference type="Rhea" id="RHEA-COMP:10375"/>
        <dbReference type="Rhea" id="RHEA-COMP:10376"/>
        <dbReference type="Rhea" id="RHEA-COMP:14737"/>
        <dbReference type="Rhea" id="RHEA-COMP:14739"/>
        <dbReference type="ChEBI" id="CHEBI:13193"/>
        <dbReference type="ChEBI" id="CHEBI:15378"/>
        <dbReference type="ChEBI" id="CHEBI:17319"/>
        <dbReference type="ChEBI" id="CHEBI:17499"/>
        <dbReference type="ChEBI" id="CHEBI:29917"/>
        <dbReference type="ChEBI" id="CHEBI:57844"/>
        <dbReference type="ChEBI" id="CHEBI:57856"/>
        <dbReference type="ChEBI" id="CHEBI:59789"/>
        <dbReference type="ChEBI" id="CHEBI:64428"/>
        <dbReference type="ChEBI" id="CHEBI:74415"/>
        <dbReference type="ChEBI" id="CHEBI:74417"/>
        <dbReference type="EC" id="2.8.4.3"/>
    </reaction>
</comment>
<comment type="cofactor">
    <cofactor evidence="1">
        <name>[4Fe-4S] cluster</name>
        <dbReference type="ChEBI" id="CHEBI:49883"/>
    </cofactor>
    <text evidence="1">Binds 2 [4Fe-4S] clusters. One cluster is coordinated with 3 cysteines and an exchangeable S-adenosyl-L-methionine.</text>
</comment>
<comment type="subunit">
    <text evidence="1">Monomer.</text>
</comment>
<comment type="subcellular location">
    <subcellularLocation>
        <location evidence="1">Cytoplasm</location>
    </subcellularLocation>
</comment>
<comment type="similarity">
    <text evidence="1">Belongs to the methylthiotransferase family. MiaB subfamily.</text>
</comment>
<comment type="sequence caution" evidence="3">
    <conflict type="erroneous initiation">
        <sequence resource="EMBL-CDS" id="AAX64604"/>
    </conflict>
</comment>
<keyword id="KW-0004">4Fe-4S</keyword>
<keyword id="KW-0963">Cytoplasm</keyword>
<keyword id="KW-0408">Iron</keyword>
<keyword id="KW-0411">Iron-sulfur</keyword>
<keyword id="KW-0479">Metal-binding</keyword>
<keyword id="KW-0949">S-adenosyl-L-methionine</keyword>
<keyword id="KW-0808">Transferase</keyword>
<keyword id="KW-0819">tRNA processing</keyword>
<protein>
    <recommendedName>
        <fullName evidence="1">tRNA-2-methylthio-N(6)-dimethylallyladenosine synthase</fullName>
        <ecNumber evidence="1">2.8.4.3</ecNumber>
    </recommendedName>
    <alternativeName>
        <fullName evidence="1">(Dimethylallyl)adenosine tRNA methylthiotransferase MiaB</fullName>
    </alternativeName>
    <alternativeName>
        <fullName evidence="1">tRNA-i(6)A37 methylthiotransferase</fullName>
    </alternativeName>
</protein>
<feature type="chain" id="PRO_0000374521" description="tRNA-2-methylthio-N(6)-dimethylallyladenosine synthase">
    <location>
        <begin position="1"/>
        <end position="474"/>
    </location>
</feature>
<feature type="domain" description="MTTase N-terminal" evidence="1">
    <location>
        <begin position="3"/>
        <end position="120"/>
    </location>
</feature>
<feature type="domain" description="Radical SAM core" evidence="2">
    <location>
        <begin position="143"/>
        <end position="375"/>
    </location>
</feature>
<feature type="domain" description="TRAM" evidence="1">
    <location>
        <begin position="378"/>
        <end position="441"/>
    </location>
</feature>
<feature type="binding site" evidence="1">
    <location>
        <position position="12"/>
    </location>
    <ligand>
        <name>[4Fe-4S] cluster</name>
        <dbReference type="ChEBI" id="CHEBI:49883"/>
        <label>1</label>
    </ligand>
</feature>
<feature type="binding site" evidence="1">
    <location>
        <position position="49"/>
    </location>
    <ligand>
        <name>[4Fe-4S] cluster</name>
        <dbReference type="ChEBI" id="CHEBI:49883"/>
        <label>1</label>
    </ligand>
</feature>
<feature type="binding site" evidence="1">
    <location>
        <position position="83"/>
    </location>
    <ligand>
        <name>[4Fe-4S] cluster</name>
        <dbReference type="ChEBI" id="CHEBI:49883"/>
        <label>1</label>
    </ligand>
</feature>
<feature type="binding site" evidence="1">
    <location>
        <position position="157"/>
    </location>
    <ligand>
        <name>[4Fe-4S] cluster</name>
        <dbReference type="ChEBI" id="CHEBI:49883"/>
        <label>2</label>
        <note>4Fe-4S-S-AdoMet</note>
    </ligand>
</feature>
<feature type="binding site" evidence="1">
    <location>
        <position position="161"/>
    </location>
    <ligand>
        <name>[4Fe-4S] cluster</name>
        <dbReference type="ChEBI" id="CHEBI:49883"/>
        <label>2</label>
        <note>4Fe-4S-S-AdoMet</note>
    </ligand>
</feature>
<feature type="binding site" evidence="1">
    <location>
        <position position="164"/>
    </location>
    <ligand>
        <name>[4Fe-4S] cluster</name>
        <dbReference type="ChEBI" id="CHEBI:49883"/>
        <label>2</label>
        <note>4Fe-4S-S-AdoMet</note>
    </ligand>
</feature>